<feature type="chain" id="PRO_1000087466" description="tRNA N6-adenosine threonylcarbamoyltransferase">
    <location>
        <begin position="1"/>
        <end position="360"/>
    </location>
</feature>
<feature type="binding site" evidence="1">
    <location>
        <position position="111"/>
    </location>
    <ligand>
        <name>Fe cation</name>
        <dbReference type="ChEBI" id="CHEBI:24875"/>
    </ligand>
</feature>
<feature type="binding site" evidence="1">
    <location>
        <position position="115"/>
    </location>
    <ligand>
        <name>Fe cation</name>
        <dbReference type="ChEBI" id="CHEBI:24875"/>
    </ligand>
</feature>
<feature type="binding site" evidence="1">
    <location>
        <begin position="134"/>
        <end position="138"/>
    </location>
    <ligand>
        <name>substrate</name>
    </ligand>
</feature>
<feature type="binding site" evidence="1">
    <location>
        <position position="167"/>
    </location>
    <ligand>
        <name>substrate</name>
    </ligand>
</feature>
<feature type="binding site" evidence="1">
    <location>
        <position position="180"/>
    </location>
    <ligand>
        <name>substrate</name>
    </ligand>
</feature>
<feature type="binding site" evidence="1">
    <location>
        <position position="184"/>
    </location>
    <ligand>
        <name>substrate</name>
    </ligand>
</feature>
<feature type="binding site" evidence="1">
    <location>
        <position position="279"/>
    </location>
    <ligand>
        <name>substrate</name>
    </ligand>
</feature>
<feature type="binding site" evidence="1">
    <location>
        <position position="307"/>
    </location>
    <ligand>
        <name>Fe cation</name>
        <dbReference type="ChEBI" id="CHEBI:24875"/>
    </ligand>
</feature>
<reference key="1">
    <citation type="journal article" date="2008" name="Proc. Natl. Acad. Sci. U.S.A.">
        <title>Niche adaptation and genome expansion in the chlorophyll d-producing cyanobacterium Acaryochloris marina.</title>
        <authorList>
            <person name="Swingley W.D."/>
            <person name="Chen M."/>
            <person name="Cheung P.C."/>
            <person name="Conrad A.L."/>
            <person name="Dejesa L.C."/>
            <person name="Hao J."/>
            <person name="Honchak B.M."/>
            <person name="Karbach L.E."/>
            <person name="Kurdoglu A."/>
            <person name="Lahiri S."/>
            <person name="Mastrian S.D."/>
            <person name="Miyashita H."/>
            <person name="Page L."/>
            <person name="Ramakrishna P."/>
            <person name="Satoh S."/>
            <person name="Sattley W.M."/>
            <person name="Shimada Y."/>
            <person name="Taylor H.L."/>
            <person name="Tomo T."/>
            <person name="Tsuchiya T."/>
            <person name="Wang Z.T."/>
            <person name="Raymond J."/>
            <person name="Mimuro M."/>
            <person name="Blankenship R.E."/>
            <person name="Touchman J.W."/>
        </authorList>
    </citation>
    <scope>NUCLEOTIDE SEQUENCE [LARGE SCALE GENOMIC DNA]</scope>
    <source>
        <strain>MBIC 11017</strain>
    </source>
</reference>
<proteinExistence type="inferred from homology"/>
<name>TSAD_ACAM1</name>
<dbReference type="EC" id="2.3.1.234" evidence="1"/>
<dbReference type="EMBL" id="CP000828">
    <property type="protein sequence ID" value="ABW26469.1"/>
    <property type="molecule type" value="Genomic_DNA"/>
</dbReference>
<dbReference type="RefSeq" id="WP_012162000.1">
    <property type="nucleotide sequence ID" value="NC_009925.1"/>
</dbReference>
<dbReference type="SMR" id="B0C7S8"/>
<dbReference type="STRING" id="329726.AM1_1441"/>
<dbReference type="KEGG" id="amr:AM1_1441"/>
<dbReference type="eggNOG" id="COG0533">
    <property type="taxonomic scope" value="Bacteria"/>
</dbReference>
<dbReference type="HOGENOM" id="CLU_023208_0_2_3"/>
<dbReference type="OrthoDB" id="9806197at2"/>
<dbReference type="Proteomes" id="UP000000268">
    <property type="component" value="Chromosome"/>
</dbReference>
<dbReference type="GO" id="GO:0005737">
    <property type="term" value="C:cytoplasm"/>
    <property type="evidence" value="ECO:0007669"/>
    <property type="project" value="UniProtKB-SubCell"/>
</dbReference>
<dbReference type="GO" id="GO:0005506">
    <property type="term" value="F:iron ion binding"/>
    <property type="evidence" value="ECO:0007669"/>
    <property type="project" value="UniProtKB-UniRule"/>
</dbReference>
<dbReference type="GO" id="GO:0061711">
    <property type="term" value="F:N(6)-L-threonylcarbamoyladenine synthase activity"/>
    <property type="evidence" value="ECO:0007669"/>
    <property type="project" value="UniProtKB-EC"/>
</dbReference>
<dbReference type="GO" id="GO:0002949">
    <property type="term" value="P:tRNA threonylcarbamoyladenosine modification"/>
    <property type="evidence" value="ECO:0007669"/>
    <property type="project" value="UniProtKB-UniRule"/>
</dbReference>
<dbReference type="CDD" id="cd24133">
    <property type="entry name" value="ASKHA_NBD_TsaD_bac"/>
    <property type="match status" value="1"/>
</dbReference>
<dbReference type="FunFam" id="3.30.420.40:FF:000012">
    <property type="entry name" value="tRNA N6-adenosine threonylcarbamoyltransferase"/>
    <property type="match status" value="1"/>
</dbReference>
<dbReference type="FunFam" id="3.30.420.40:FF:000040">
    <property type="entry name" value="tRNA N6-adenosine threonylcarbamoyltransferase"/>
    <property type="match status" value="1"/>
</dbReference>
<dbReference type="Gene3D" id="3.30.420.40">
    <property type="match status" value="2"/>
</dbReference>
<dbReference type="HAMAP" id="MF_01445">
    <property type="entry name" value="TsaD"/>
    <property type="match status" value="1"/>
</dbReference>
<dbReference type="InterPro" id="IPR043129">
    <property type="entry name" value="ATPase_NBD"/>
</dbReference>
<dbReference type="InterPro" id="IPR000905">
    <property type="entry name" value="Gcp-like_dom"/>
</dbReference>
<dbReference type="InterPro" id="IPR017861">
    <property type="entry name" value="KAE1/TsaD"/>
</dbReference>
<dbReference type="InterPro" id="IPR017860">
    <property type="entry name" value="Peptidase_M22_CS"/>
</dbReference>
<dbReference type="InterPro" id="IPR022450">
    <property type="entry name" value="TsaD"/>
</dbReference>
<dbReference type="NCBIfam" id="TIGR00329">
    <property type="entry name" value="gcp_kae1"/>
    <property type="match status" value="1"/>
</dbReference>
<dbReference type="NCBIfam" id="TIGR03723">
    <property type="entry name" value="T6A_TsaD_YgjD"/>
    <property type="match status" value="1"/>
</dbReference>
<dbReference type="PANTHER" id="PTHR11735">
    <property type="entry name" value="TRNA N6-ADENOSINE THREONYLCARBAMOYLTRANSFERASE"/>
    <property type="match status" value="1"/>
</dbReference>
<dbReference type="PANTHER" id="PTHR11735:SF6">
    <property type="entry name" value="TRNA N6-ADENOSINE THREONYLCARBAMOYLTRANSFERASE, MITOCHONDRIAL"/>
    <property type="match status" value="1"/>
</dbReference>
<dbReference type="Pfam" id="PF00814">
    <property type="entry name" value="TsaD"/>
    <property type="match status" value="1"/>
</dbReference>
<dbReference type="PRINTS" id="PR00789">
    <property type="entry name" value="OSIALOPTASE"/>
</dbReference>
<dbReference type="SUPFAM" id="SSF53067">
    <property type="entry name" value="Actin-like ATPase domain"/>
    <property type="match status" value="2"/>
</dbReference>
<dbReference type="PROSITE" id="PS01016">
    <property type="entry name" value="GLYCOPROTEASE"/>
    <property type="match status" value="1"/>
</dbReference>
<evidence type="ECO:0000255" key="1">
    <source>
        <dbReference type="HAMAP-Rule" id="MF_01445"/>
    </source>
</evidence>
<keyword id="KW-0012">Acyltransferase</keyword>
<keyword id="KW-0963">Cytoplasm</keyword>
<keyword id="KW-0408">Iron</keyword>
<keyword id="KW-0479">Metal-binding</keyword>
<keyword id="KW-1185">Reference proteome</keyword>
<keyword id="KW-0808">Transferase</keyword>
<keyword id="KW-0819">tRNA processing</keyword>
<protein>
    <recommendedName>
        <fullName evidence="1">tRNA N6-adenosine threonylcarbamoyltransferase</fullName>
        <ecNumber evidence="1">2.3.1.234</ecNumber>
    </recommendedName>
    <alternativeName>
        <fullName evidence="1">N6-L-threonylcarbamoyladenine synthase</fullName>
        <shortName evidence="1">t(6)A synthase</shortName>
    </alternativeName>
    <alternativeName>
        <fullName evidence="1">t(6)A37 threonylcarbamoyladenosine biosynthesis protein TsaD</fullName>
    </alternativeName>
    <alternativeName>
        <fullName evidence="1">tRNA threonylcarbamoyladenosine biosynthesis protein TsaD</fullName>
    </alternativeName>
</protein>
<organism>
    <name type="scientific">Acaryochloris marina (strain MBIC 11017)</name>
    <dbReference type="NCBI Taxonomy" id="329726"/>
    <lineage>
        <taxon>Bacteria</taxon>
        <taxon>Bacillati</taxon>
        <taxon>Cyanobacteriota</taxon>
        <taxon>Cyanophyceae</taxon>
        <taxon>Acaryochloridales</taxon>
        <taxon>Acaryochloridaceae</taxon>
        <taxon>Acaryochloris</taxon>
    </lineage>
</organism>
<accession>B0C7S8</accession>
<sequence length="360" mass="37972">MATVLAIETSCDETAAAVVKKRHILSNIVASQIDIHRPYGGVVPEVASRHHVESINDVVSEALSQAQIDWPDIDGIAVTCAPGLVGALLVGLTAAKTLVMLHNKPLIGVHHLEGHIHASYLQNPDLASPFLCLLVSGGHTSLIKAEDCGLYRTLGQTRDDAAGEAFDKVARLLDLGYPGGPAIDRIAKLGNPKAFALPEGKISLPEGGFHPYDTSFSGLKTAVLRLVESFRLRGEDVPVADIAASFQQTVAQALTRRAIKCALDYGLSTIAVGGGVAANSALRQQLLTAAEDKKLQVLFPPLSLCTDNAAMIACAGAEHLDRGHTSALTLAALSRMPISKVMELYPGSSPMHPPLELDAE</sequence>
<comment type="function">
    <text evidence="1">Required for the formation of a threonylcarbamoyl group on adenosine at position 37 (t(6)A37) in tRNAs that read codons beginning with adenine. Is involved in the transfer of the threonylcarbamoyl moiety of threonylcarbamoyl-AMP (TC-AMP) to the N6 group of A37, together with TsaE and TsaB. TsaD likely plays a direct catalytic role in this reaction.</text>
</comment>
<comment type="catalytic activity">
    <reaction evidence="1">
        <text>L-threonylcarbamoyladenylate + adenosine(37) in tRNA = N(6)-L-threonylcarbamoyladenosine(37) in tRNA + AMP + H(+)</text>
        <dbReference type="Rhea" id="RHEA:37059"/>
        <dbReference type="Rhea" id="RHEA-COMP:10162"/>
        <dbReference type="Rhea" id="RHEA-COMP:10163"/>
        <dbReference type="ChEBI" id="CHEBI:15378"/>
        <dbReference type="ChEBI" id="CHEBI:73682"/>
        <dbReference type="ChEBI" id="CHEBI:74411"/>
        <dbReference type="ChEBI" id="CHEBI:74418"/>
        <dbReference type="ChEBI" id="CHEBI:456215"/>
        <dbReference type="EC" id="2.3.1.234"/>
    </reaction>
</comment>
<comment type="cofactor">
    <cofactor evidence="1">
        <name>Fe(2+)</name>
        <dbReference type="ChEBI" id="CHEBI:29033"/>
    </cofactor>
    <text evidence="1">Binds 1 Fe(2+) ion per subunit.</text>
</comment>
<comment type="subcellular location">
    <subcellularLocation>
        <location evidence="1">Cytoplasm</location>
    </subcellularLocation>
</comment>
<comment type="similarity">
    <text evidence="1">Belongs to the KAE1 / TsaD family.</text>
</comment>
<gene>
    <name evidence="1" type="primary">tsaD</name>
    <name type="synonym">gcp</name>
    <name type="ordered locus">AM1_1441</name>
</gene>